<protein>
    <recommendedName>
        <fullName evidence="5">Polyprenyl transferase eriF</fullName>
        <ecNumber evidence="3">2.5.1.-</ecNumber>
    </recommendedName>
    <alternativeName>
        <fullName evidence="5">Erinacine biosynthesis cluster protein F</fullName>
    </alternativeName>
</protein>
<accession>A0A1V0QSA9</accession>
<organism>
    <name type="scientific">Hericium erinaceus</name>
    <name type="common">Lion's mane mushroom</name>
    <name type="synonym">Hydnum erinaceus</name>
    <dbReference type="NCBI Taxonomy" id="91752"/>
    <lineage>
        <taxon>Eukaryota</taxon>
        <taxon>Fungi</taxon>
        <taxon>Dikarya</taxon>
        <taxon>Basidiomycota</taxon>
        <taxon>Agaricomycotina</taxon>
        <taxon>Agaricomycetes</taxon>
        <taxon>Russulales</taxon>
        <taxon>Hericiaceae</taxon>
        <taxon>Hericium</taxon>
    </lineage>
</organism>
<gene>
    <name evidence="5" type="primary">eriF</name>
</gene>
<reference key="1">
    <citation type="journal article" date="2017" name="Angew. Chem. Int. Ed.">
        <title>Discovery and characterization of a new family of diterpene cyclases in bacteria and fungi.</title>
        <authorList>
            <person name="Yang Y.L."/>
            <person name="Zhang S."/>
            <person name="Ma K."/>
            <person name="Xu Y."/>
            <person name="Tao Q."/>
            <person name="Chen Y."/>
            <person name="Chen J."/>
            <person name="Guo S."/>
            <person name="Ren J."/>
            <person name="Wang W."/>
            <person name="Tao Y."/>
            <person name="Yin W.B."/>
            <person name="Liu H."/>
        </authorList>
    </citation>
    <scope>NUCLEOTIDE SEQUENCE [MRNA]</scope>
    <scope>FUNCTION</scope>
    <scope>INDUCTION</scope>
</reference>
<reference key="2">
    <citation type="journal article" date="2019" name="J. Am. Chem. Soc.">
        <title>Efficient reconstitution of basidiomycota diterpene erinacine gene cluster in ascomycota host Aspergillus oryzae based on genomic DNA sequences.</title>
        <authorList>
            <person name="Liu C."/>
            <person name="Minami A."/>
            <person name="Ozaki T."/>
            <person name="Wu J."/>
            <person name="Kawagishi H."/>
            <person name="Maruyama J.I."/>
            <person name="Oikawa H."/>
        </authorList>
    </citation>
    <scope>FUNCTION</scope>
</reference>
<evidence type="ECO:0000250" key="1">
    <source>
        <dbReference type="UniProtKB" id="P32378"/>
    </source>
</evidence>
<evidence type="ECO:0000255" key="2"/>
<evidence type="ECO:0000269" key="3">
    <source>
    </source>
</evidence>
<evidence type="ECO:0000269" key="4">
    <source>
    </source>
</evidence>
<evidence type="ECO:0000303" key="5">
    <source>
    </source>
</evidence>
<evidence type="ECO:0000305" key="6"/>
<evidence type="ECO:0000305" key="7">
    <source>
    </source>
</evidence>
<keyword id="KW-0472">Membrane</keyword>
<keyword id="KW-0808">Transferase</keyword>
<keyword id="KW-0812">Transmembrane</keyword>
<keyword id="KW-1133">Transmembrane helix</keyword>
<dbReference type="EC" id="2.5.1.-" evidence="3"/>
<dbReference type="EMBL" id="KY683781">
    <property type="protein sequence ID" value="ARE72243.1"/>
    <property type="molecule type" value="mRNA"/>
</dbReference>
<dbReference type="GO" id="GO:0016020">
    <property type="term" value="C:membrane"/>
    <property type="evidence" value="ECO:0007669"/>
    <property type="project" value="UniProtKB-SubCell"/>
</dbReference>
<dbReference type="GO" id="GO:0016765">
    <property type="term" value="F:transferase activity, transferring alkyl or aryl (other than methyl) groups"/>
    <property type="evidence" value="ECO:0007669"/>
    <property type="project" value="InterPro"/>
</dbReference>
<dbReference type="Gene3D" id="1.10.357.140">
    <property type="entry name" value="UbiA prenyltransferase"/>
    <property type="match status" value="1"/>
</dbReference>
<dbReference type="Gene3D" id="1.20.120.1780">
    <property type="entry name" value="UbiA prenyltransferase"/>
    <property type="match status" value="1"/>
</dbReference>
<dbReference type="InterPro" id="IPR050475">
    <property type="entry name" value="Prenyltransferase_related"/>
</dbReference>
<dbReference type="InterPro" id="IPR000537">
    <property type="entry name" value="UbiA_prenyltransferase"/>
</dbReference>
<dbReference type="InterPro" id="IPR044878">
    <property type="entry name" value="UbiA_sf"/>
</dbReference>
<dbReference type="PANTHER" id="PTHR42723">
    <property type="entry name" value="CHLOROPHYLL SYNTHASE"/>
    <property type="match status" value="1"/>
</dbReference>
<dbReference type="PANTHER" id="PTHR42723:SF1">
    <property type="entry name" value="CHLOROPHYLL SYNTHASE, CHLOROPLASTIC"/>
    <property type="match status" value="1"/>
</dbReference>
<dbReference type="Pfam" id="PF01040">
    <property type="entry name" value="UbiA"/>
    <property type="match status" value="1"/>
</dbReference>
<proteinExistence type="evidence at transcript level"/>
<name>ERIF_HERER</name>
<feature type="chain" id="PRO_0000452926" description="Polyprenyl transferase eriF">
    <location>
        <begin position="1"/>
        <end position="288"/>
    </location>
</feature>
<feature type="transmembrane region" description="Helical" evidence="2">
    <location>
        <begin position="24"/>
        <end position="44"/>
    </location>
</feature>
<feature type="transmembrane region" description="Helical" evidence="2">
    <location>
        <begin position="51"/>
        <end position="71"/>
    </location>
</feature>
<feature type="transmembrane region" description="Helical" evidence="2">
    <location>
        <begin position="101"/>
        <end position="121"/>
    </location>
</feature>
<feature type="transmembrane region" description="Helical" evidence="2">
    <location>
        <begin position="145"/>
        <end position="165"/>
    </location>
</feature>
<feature type="transmembrane region" description="Helical" evidence="2">
    <location>
        <begin position="215"/>
        <end position="235"/>
    </location>
</feature>
<feature type="transmembrane region" description="Helical" evidence="2">
    <location>
        <begin position="268"/>
        <end position="288"/>
    </location>
</feature>
<comment type="function">
    <text evidence="3 4 7">Polyprenyl transferase; part of the gene cluster that mediates the biosynthesis of erinacines, cyathane-xylosides that show unique biological activities, including leishmanicidal activity, stimulating activity for nerve growth-factor synthesis, and agonistic activity toward the kappa opioid receptor (PubMed:28371074, PubMed:31535864). The role of eriF within the pathway has still to be determined (Probable). The first step of the erinacines biosynthesis pathway is catalyzed by the geranylgeranyl diphosphate (GGPP) synthase eriE via conversion of farnesyl pyrophosphate and isopentyl pyrophosphate into geranylgeranyl pyrophosphate (GGPP). GGPP is then substrate of the diterpene cyclase eriG for the production of cyatha-3,12-diene. The cytochrome P450 monooxygenase eriI then hydroxylates cyatha-3,12-diene at C-14 of the seven-membered ring to produce erinacol, which is further hydroxylated at C-15 by the cytochrome P450 monooxygenase eriC to yield cyathadiol. The cytochrome P450 monooxygenase eriA then catalyzes C-11 hydroxylation in the presence of the short chain dehydrogenase/reductase (SDR) eriH, which leads to the production of cyathatriol. The acetyltransferase eriL converts cyathatriol into 11-O-acetyl-cyathatriol. The SDR eriH catalyzes further oxidation of 11-O-acetyl-cyathatriol into 1-O-acetylcyathin A3. Finally, the glycosyl transferase eriJ tranfers xylose from UDP-xylose onto C-14 of 11-O-acetyl-cyathatriol to form eracine Q. EriJ is also able to convert 11-O-acetyl-cyathatriol to eracine Q2 by using UDP-D-glucose as cosubstrate, but at a lower rate (Probable).</text>
</comment>
<comment type="cofactor">
    <cofactor evidence="1">
        <name>Mg(2+)</name>
        <dbReference type="ChEBI" id="CHEBI:18420"/>
    </cofactor>
</comment>
<comment type="subcellular location">
    <subcellularLocation>
        <location evidence="2">Membrane</location>
        <topology evidence="2">Multi-pass membrane protein</topology>
    </subcellularLocation>
</comment>
<comment type="induction">
    <text evidence="3">Expression is induced under erinacine P-producing conditions.</text>
</comment>
<comment type="similarity">
    <text evidence="6">Belongs to the UbiA prenyltransferase family.</text>
</comment>
<sequence>MPVFAQVAHEIDIFFSFSWRDWSASIIPGSIFAVGAMRGLTLPLTTLVARYIFLVTWLTPYIYFFTLLNQVTSVDEDMINKPNRPIPSGKVTLQGAQRRSIAAFSVFLGVALYEPSLLPETLCWISTTAFLCLTSYGNHWFGKNCIAMATGAWALLSASWKAISPSTPTSDTRIYAMCGWAALTTHIQDLRDVKGDAAVGRMTLPLVFGDMGSRFIITFLALPAACCILSLGGIFQLSPITLGSLHAILGHRVLRQAGSRYDHKTYMFYTYIFCFILMLSSMDSHGLI</sequence>